<proteinExistence type="predicted"/>
<sequence length="147" mass="15324">MLVIVGGTTTGILFLGPRYLPRYLPILGINGASAMKKSYFLANFLACLGLLAISSSSALLITSSPSLLAASATAPSAMTAIFTSFPLPWGSTTSSLNLFSGRLRSISLRFTATSTLCVKLRGLARALASFTASTIFCLSKAILDIPP</sequence>
<name>Y2001_PYRHO</name>
<protein>
    <recommendedName>
        <fullName>Uncharacterized protein PH2001</fullName>
    </recommendedName>
</protein>
<keyword id="KW-1003">Cell membrane</keyword>
<keyword id="KW-0472">Membrane</keyword>
<keyword id="KW-0812">Transmembrane</keyword>
<keyword id="KW-1133">Transmembrane helix</keyword>
<dbReference type="EMBL" id="BA000001">
    <property type="protein sequence ID" value="BAA31943.1"/>
    <property type="molecule type" value="Genomic_DNA"/>
</dbReference>
<dbReference type="PIR" id="A71217">
    <property type="entry name" value="A71217"/>
</dbReference>
<dbReference type="EnsemblBacteria" id="BAA31943">
    <property type="protein sequence ID" value="BAA31943"/>
    <property type="gene ID" value="BAA31943"/>
</dbReference>
<dbReference type="KEGG" id="pho:PH2001"/>
<dbReference type="Proteomes" id="UP000000752">
    <property type="component" value="Chromosome"/>
</dbReference>
<dbReference type="GO" id="GO:0005886">
    <property type="term" value="C:plasma membrane"/>
    <property type="evidence" value="ECO:0007669"/>
    <property type="project" value="UniProtKB-SubCell"/>
</dbReference>
<evidence type="ECO:0000255" key="1"/>
<evidence type="ECO:0000305" key="2"/>
<organism>
    <name type="scientific">Pyrococcus horikoshii (strain ATCC 700860 / DSM 12428 / JCM 9974 / NBRC 100139 / OT-3)</name>
    <dbReference type="NCBI Taxonomy" id="70601"/>
    <lineage>
        <taxon>Archaea</taxon>
        <taxon>Methanobacteriati</taxon>
        <taxon>Methanobacteriota</taxon>
        <taxon>Thermococci</taxon>
        <taxon>Thermococcales</taxon>
        <taxon>Thermococcaceae</taxon>
        <taxon>Pyrococcus</taxon>
    </lineage>
</organism>
<accession>O57781</accession>
<gene>
    <name type="ordered locus">PH2001</name>
</gene>
<feature type="chain" id="PRO_0000184780" description="Uncharacterized protein PH2001">
    <location>
        <begin position="1"/>
        <end position="147"/>
    </location>
</feature>
<feature type="transmembrane region" description="Helical" evidence="1">
    <location>
        <begin position="41"/>
        <end position="61"/>
    </location>
</feature>
<feature type="transmembrane region" description="Helical" evidence="1">
    <location>
        <begin position="67"/>
        <end position="87"/>
    </location>
</feature>
<reference key="1">
    <citation type="journal article" date="1998" name="DNA Res.">
        <title>Complete sequence and gene organization of the genome of a hyper-thermophilic archaebacterium, Pyrococcus horikoshii OT3.</title>
        <authorList>
            <person name="Kawarabayasi Y."/>
            <person name="Sawada M."/>
            <person name="Horikawa H."/>
            <person name="Haikawa Y."/>
            <person name="Hino Y."/>
            <person name="Yamamoto S."/>
            <person name="Sekine M."/>
            <person name="Baba S."/>
            <person name="Kosugi H."/>
            <person name="Hosoyama A."/>
            <person name="Nagai Y."/>
            <person name="Sakai M."/>
            <person name="Ogura K."/>
            <person name="Otsuka R."/>
            <person name="Nakazawa H."/>
            <person name="Takamiya M."/>
            <person name="Ohfuku Y."/>
            <person name="Funahashi T."/>
            <person name="Tanaka T."/>
            <person name="Kudoh Y."/>
            <person name="Yamazaki J."/>
            <person name="Kushida N."/>
            <person name="Oguchi A."/>
            <person name="Aoki K."/>
            <person name="Yoshizawa T."/>
            <person name="Nakamura Y."/>
            <person name="Robb F.T."/>
            <person name="Horikoshi K."/>
            <person name="Masuchi Y."/>
            <person name="Shizuya H."/>
            <person name="Kikuchi H."/>
        </authorList>
    </citation>
    <scope>NUCLEOTIDE SEQUENCE [LARGE SCALE GENOMIC DNA]</scope>
    <source>
        <strain>ATCC 700860 / DSM 12428 / JCM 9974 / NBRC 100139 / OT-3</strain>
    </source>
</reference>
<comment type="subcellular location">
    <subcellularLocation>
        <location evidence="2">Cell membrane</location>
        <topology evidence="2">Multi-pass membrane protein</topology>
    </subcellularLocation>
</comment>